<dbReference type="EMBL" id="AE017199">
    <property type="protein sequence ID" value="AAR39294.1"/>
    <property type="molecule type" value="Genomic_DNA"/>
</dbReference>
<dbReference type="SMR" id="Q74M84"/>
<dbReference type="STRING" id="228908.NEQ450"/>
<dbReference type="EnsemblBacteria" id="AAR39294">
    <property type="protein sequence ID" value="AAR39294"/>
    <property type="gene ID" value="NEQ450"/>
</dbReference>
<dbReference type="KEGG" id="neq:NEQ450"/>
<dbReference type="PATRIC" id="fig|228908.8.peg.463"/>
<dbReference type="HOGENOM" id="CLU_084051_0_2_2"/>
<dbReference type="Proteomes" id="UP000000578">
    <property type="component" value="Chromosome"/>
</dbReference>
<dbReference type="GO" id="GO:1990904">
    <property type="term" value="C:ribonucleoprotein complex"/>
    <property type="evidence" value="ECO:0007669"/>
    <property type="project" value="UniProtKB-KW"/>
</dbReference>
<dbReference type="GO" id="GO:0005840">
    <property type="term" value="C:ribosome"/>
    <property type="evidence" value="ECO:0007669"/>
    <property type="project" value="UniProtKB-KW"/>
</dbReference>
<dbReference type="GO" id="GO:0003735">
    <property type="term" value="F:structural constituent of ribosome"/>
    <property type="evidence" value="ECO:0007669"/>
    <property type="project" value="InterPro"/>
</dbReference>
<dbReference type="GO" id="GO:0006412">
    <property type="term" value="P:translation"/>
    <property type="evidence" value="ECO:0007669"/>
    <property type="project" value="UniProtKB-UniRule"/>
</dbReference>
<dbReference type="CDD" id="cd01433">
    <property type="entry name" value="Ribosomal_L16_L10e"/>
    <property type="match status" value="1"/>
</dbReference>
<dbReference type="Gene3D" id="3.90.1170.10">
    <property type="entry name" value="Ribosomal protein L10e/L16"/>
    <property type="match status" value="1"/>
</dbReference>
<dbReference type="HAMAP" id="MF_00448">
    <property type="entry name" value="Ribosomal_uL16_arch"/>
    <property type="match status" value="1"/>
</dbReference>
<dbReference type="InterPro" id="IPR047873">
    <property type="entry name" value="Ribosomal_uL16"/>
</dbReference>
<dbReference type="InterPro" id="IPR022981">
    <property type="entry name" value="Ribosomal_uL16_arc"/>
</dbReference>
<dbReference type="InterPro" id="IPR018255">
    <property type="entry name" value="Ribosomal_uL16_CS_euk_arc"/>
</dbReference>
<dbReference type="InterPro" id="IPR016180">
    <property type="entry name" value="Ribosomal_uL16_dom"/>
</dbReference>
<dbReference type="InterPro" id="IPR001197">
    <property type="entry name" value="Ribosomal_uL16_euk_arch"/>
</dbReference>
<dbReference type="InterPro" id="IPR036920">
    <property type="entry name" value="Ribosomal_uL16_sf"/>
</dbReference>
<dbReference type="NCBIfam" id="NF003239">
    <property type="entry name" value="PRK04199.1-4"/>
    <property type="match status" value="1"/>
</dbReference>
<dbReference type="PANTHER" id="PTHR11726">
    <property type="entry name" value="60S RIBOSOMAL PROTEIN L10"/>
    <property type="match status" value="1"/>
</dbReference>
<dbReference type="Pfam" id="PF00252">
    <property type="entry name" value="Ribosomal_L16"/>
    <property type="match status" value="1"/>
</dbReference>
<dbReference type="PIRSF" id="PIRSF005590">
    <property type="entry name" value="Ribosomal_L10"/>
    <property type="match status" value="1"/>
</dbReference>
<dbReference type="SUPFAM" id="SSF54686">
    <property type="entry name" value="Ribosomal protein L16p/L10e"/>
    <property type="match status" value="1"/>
</dbReference>
<dbReference type="PROSITE" id="PS01257">
    <property type="entry name" value="RIBOSOMAL_L10E"/>
    <property type="match status" value="1"/>
</dbReference>
<organism>
    <name type="scientific">Nanoarchaeum equitans (strain Kin4-M)</name>
    <dbReference type="NCBI Taxonomy" id="228908"/>
    <lineage>
        <taxon>Archaea</taxon>
        <taxon>Nanobdellota</taxon>
        <taxon>Candidatus Nanoarchaeia</taxon>
        <taxon>Nanoarchaeales</taxon>
        <taxon>Nanoarchaeaceae</taxon>
        <taxon>Nanoarchaeum</taxon>
    </lineage>
</organism>
<proteinExistence type="inferred from homology"/>
<protein>
    <recommendedName>
        <fullName evidence="1">Large ribosomal subunit protein uL16</fullName>
    </recommendedName>
    <alternativeName>
        <fullName evidence="2">50S ribosomal protein L10e</fullName>
    </alternativeName>
</protein>
<accession>Q74M84</accession>
<feature type="chain" id="PRO_0000147140" description="Large ribosomal subunit protein uL16">
    <location>
        <begin position="1"/>
        <end position="186"/>
    </location>
</feature>
<gene>
    <name evidence="1" type="primary">rpl10e</name>
    <name type="ordered locus">NEQ450</name>
</gene>
<sequence>MARLRRWHCYRKLEVPYTRVSRSKNKNYIPGAKPTMVRLFHMGELTRNPSEWQYEASLVAKENHQIRDNAIEAIRVMVNKYLESTLGKKRYLFIIRKYPHHIYREKPVVGGYAGADRISQGMRLSFGRPKGRAVQIYEGEKLLSIFFDDITKAKDIKYFLQVARSKLPWRYREEIVEVKSGKPLAL</sequence>
<keyword id="KW-1185">Reference proteome</keyword>
<keyword id="KW-0687">Ribonucleoprotein</keyword>
<keyword id="KW-0689">Ribosomal protein</keyword>
<evidence type="ECO:0000255" key="1">
    <source>
        <dbReference type="HAMAP-Rule" id="MF_00448"/>
    </source>
</evidence>
<evidence type="ECO:0000305" key="2"/>
<comment type="similarity">
    <text evidence="1">Belongs to the universal ribosomal protein uL16 family.</text>
</comment>
<reference key="1">
    <citation type="journal article" date="2003" name="Proc. Natl. Acad. Sci. U.S.A.">
        <title>The genome of Nanoarchaeum equitans: insights into early archaeal evolution and derived parasitism.</title>
        <authorList>
            <person name="Waters E."/>
            <person name="Hohn M.J."/>
            <person name="Ahel I."/>
            <person name="Graham D.E."/>
            <person name="Adams M.D."/>
            <person name="Barnstead M."/>
            <person name="Beeson K.Y."/>
            <person name="Bibbs L."/>
            <person name="Bolanos R."/>
            <person name="Keller M."/>
            <person name="Kretz K."/>
            <person name="Lin X."/>
            <person name="Mathur E."/>
            <person name="Ni J."/>
            <person name="Podar M."/>
            <person name="Richardson T."/>
            <person name="Sutton G.G."/>
            <person name="Simon M."/>
            <person name="Soell D."/>
            <person name="Stetter K.O."/>
            <person name="Short J.M."/>
            <person name="Noorderwier M."/>
        </authorList>
    </citation>
    <scope>NUCLEOTIDE SEQUENCE [LARGE SCALE GENOMIC DNA]</scope>
    <source>
        <strain>Kin4-M</strain>
    </source>
</reference>
<name>RL10E_NANEQ</name>